<reference key="1">
    <citation type="journal article" date="2002" name="Nature">
        <title>Comparison of the genomes of two Xanthomonas pathogens with differing host specificities.</title>
        <authorList>
            <person name="da Silva A.C.R."/>
            <person name="Ferro J.A."/>
            <person name="Reinach F.C."/>
            <person name="Farah C.S."/>
            <person name="Furlan L.R."/>
            <person name="Quaggio R.B."/>
            <person name="Monteiro-Vitorello C.B."/>
            <person name="Van Sluys M.A."/>
            <person name="Almeida N.F. Jr."/>
            <person name="Alves L.M.C."/>
            <person name="do Amaral A.M."/>
            <person name="Bertolini M.C."/>
            <person name="Camargo L.E.A."/>
            <person name="Camarotte G."/>
            <person name="Cannavan F."/>
            <person name="Cardozo J."/>
            <person name="Chambergo F."/>
            <person name="Ciapina L.P."/>
            <person name="Cicarelli R.M.B."/>
            <person name="Coutinho L.L."/>
            <person name="Cursino-Santos J.R."/>
            <person name="El-Dorry H."/>
            <person name="Faria J.B."/>
            <person name="Ferreira A.J.S."/>
            <person name="Ferreira R.C.C."/>
            <person name="Ferro M.I.T."/>
            <person name="Formighieri E.F."/>
            <person name="Franco M.C."/>
            <person name="Greggio C.C."/>
            <person name="Gruber A."/>
            <person name="Katsuyama A.M."/>
            <person name="Kishi L.T."/>
            <person name="Leite R.P."/>
            <person name="Lemos E.G.M."/>
            <person name="Lemos M.V.F."/>
            <person name="Locali E.C."/>
            <person name="Machado M.A."/>
            <person name="Madeira A.M.B.N."/>
            <person name="Martinez-Rossi N.M."/>
            <person name="Martins E.C."/>
            <person name="Meidanis J."/>
            <person name="Menck C.F.M."/>
            <person name="Miyaki C.Y."/>
            <person name="Moon D.H."/>
            <person name="Moreira L.M."/>
            <person name="Novo M.T.M."/>
            <person name="Okura V.K."/>
            <person name="Oliveira M.C."/>
            <person name="Oliveira V.R."/>
            <person name="Pereira H.A."/>
            <person name="Rossi A."/>
            <person name="Sena J.A.D."/>
            <person name="Silva C."/>
            <person name="de Souza R.F."/>
            <person name="Spinola L.A.F."/>
            <person name="Takita M.A."/>
            <person name="Tamura R.E."/>
            <person name="Teixeira E.C."/>
            <person name="Tezza R.I.D."/>
            <person name="Trindade dos Santos M."/>
            <person name="Truffi D."/>
            <person name="Tsai S.M."/>
            <person name="White F.F."/>
            <person name="Setubal J.C."/>
            <person name="Kitajima J.P."/>
        </authorList>
    </citation>
    <scope>NUCLEOTIDE SEQUENCE [LARGE SCALE GENOMIC DNA]</scope>
    <source>
        <strain>306</strain>
    </source>
</reference>
<dbReference type="EC" id="1.3.5.2" evidence="1"/>
<dbReference type="EMBL" id="AE008923">
    <property type="protein sequence ID" value="AAM36668.1"/>
    <property type="molecule type" value="Genomic_DNA"/>
</dbReference>
<dbReference type="RefSeq" id="WP_011051152.1">
    <property type="nucleotide sequence ID" value="NC_003919.1"/>
</dbReference>
<dbReference type="SMR" id="Q8PLJ2"/>
<dbReference type="KEGG" id="xac:XAC1805"/>
<dbReference type="eggNOG" id="COG0167">
    <property type="taxonomic scope" value="Bacteria"/>
</dbReference>
<dbReference type="HOGENOM" id="CLU_013640_2_0_6"/>
<dbReference type="UniPathway" id="UPA00070">
    <property type="reaction ID" value="UER00946"/>
</dbReference>
<dbReference type="Proteomes" id="UP000000576">
    <property type="component" value="Chromosome"/>
</dbReference>
<dbReference type="GO" id="GO:0005737">
    <property type="term" value="C:cytoplasm"/>
    <property type="evidence" value="ECO:0007669"/>
    <property type="project" value="InterPro"/>
</dbReference>
<dbReference type="GO" id="GO:0005886">
    <property type="term" value="C:plasma membrane"/>
    <property type="evidence" value="ECO:0007669"/>
    <property type="project" value="UniProtKB-SubCell"/>
</dbReference>
<dbReference type="GO" id="GO:0106430">
    <property type="term" value="F:dihydroorotate dehydrogenase (quinone) activity"/>
    <property type="evidence" value="ECO:0007669"/>
    <property type="project" value="UniProtKB-EC"/>
</dbReference>
<dbReference type="GO" id="GO:0006207">
    <property type="term" value="P:'de novo' pyrimidine nucleobase biosynthetic process"/>
    <property type="evidence" value="ECO:0007669"/>
    <property type="project" value="InterPro"/>
</dbReference>
<dbReference type="GO" id="GO:0044205">
    <property type="term" value="P:'de novo' UMP biosynthetic process"/>
    <property type="evidence" value="ECO:0007669"/>
    <property type="project" value="UniProtKB-UniRule"/>
</dbReference>
<dbReference type="CDD" id="cd04738">
    <property type="entry name" value="DHOD_2_like"/>
    <property type="match status" value="1"/>
</dbReference>
<dbReference type="FunFam" id="3.20.20.70:FF:000028">
    <property type="entry name" value="Dihydroorotate dehydrogenase (quinone)"/>
    <property type="match status" value="1"/>
</dbReference>
<dbReference type="Gene3D" id="3.20.20.70">
    <property type="entry name" value="Aldolase class I"/>
    <property type="match status" value="1"/>
</dbReference>
<dbReference type="HAMAP" id="MF_00225">
    <property type="entry name" value="DHO_dh_type2"/>
    <property type="match status" value="1"/>
</dbReference>
<dbReference type="InterPro" id="IPR013785">
    <property type="entry name" value="Aldolase_TIM"/>
</dbReference>
<dbReference type="InterPro" id="IPR050074">
    <property type="entry name" value="DHO_dehydrogenase"/>
</dbReference>
<dbReference type="InterPro" id="IPR012135">
    <property type="entry name" value="Dihydroorotate_DH_1_2"/>
</dbReference>
<dbReference type="InterPro" id="IPR005719">
    <property type="entry name" value="Dihydroorotate_DH_2"/>
</dbReference>
<dbReference type="InterPro" id="IPR005720">
    <property type="entry name" value="Dihydroorotate_DH_cat"/>
</dbReference>
<dbReference type="InterPro" id="IPR001295">
    <property type="entry name" value="Dihydroorotate_DH_CS"/>
</dbReference>
<dbReference type="NCBIfam" id="NF003644">
    <property type="entry name" value="PRK05286.1-1"/>
    <property type="match status" value="1"/>
</dbReference>
<dbReference type="NCBIfam" id="NF003645">
    <property type="entry name" value="PRK05286.1-2"/>
    <property type="match status" value="1"/>
</dbReference>
<dbReference type="NCBIfam" id="NF003646">
    <property type="entry name" value="PRK05286.1-4"/>
    <property type="match status" value="1"/>
</dbReference>
<dbReference type="NCBIfam" id="NF003652">
    <property type="entry name" value="PRK05286.2-5"/>
    <property type="match status" value="1"/>
</dbReference>
<dbReference type="NCBIfam" id="TIGR01036">
    <property type="entry name" value="pyrD_sub2"/>
    <property type="match status" value="1"/>
</dbReference>
<dbReference type="PANTHER" id="PTHR48109:SF4">
    <property type="entry name" value="DIHYDROOROTATE DEHYDROGENASE (QUINONE), MITOCHONDRIAL"/>
    <property type="match status" value="1"/>
</dbReference>
<dbReference type="PANTHER" id="PTHR48109">
    <property type="entry name" value="DIHYDROOROTATE DEHYDROGENASE (QUINONE), MITOCHONDRIAL-RELATED"/>
    <property type="match status" value="1"/>
</dbReference>
<dbReference type="Pfam" id="PF01180">
    <property type="entry name" value="DHO_dh"/>
    <property type="match status" value="1"/>
</dbReference>
<dbReference type="PIRSF" id="PIRSF000164">
    <property type="entry name" value="DHO_oxidase"/>
    <property type="match status" value="1"/>
</dbReference>
<dbReference type="SUPFAM" id="SSF51395">
    <property type="entry name" value="FMN-linked oxidoreductases"/>
    <property type="match status" value="1"/>
</dbReference>
<dbReference type="PROSITE" id="PS00911">
    <property type="entry name" value="DHODEHASE_1"/>
    <property type="match status" value="1"/>
</dbReference>
<dbReference type="PROSITE" id="PS00912">
    <property type="entry name" value="DHODEHASE_2"/>
    <property type="match status" value="1"/>
</dbReference>
<gene>
    <name evidence="1" type="primary">pyrD</name>
    <name type="ordered locus">XAC1805</name>
</gene>
<comment type="function">
    <text evidence="1">Catalyzes the conversion of dihydroorotate to orotate with quinone as electron acceptor.</text>
</comment>
<comment type="catalytic activity">
    <reaction evidence="1">
        <text>(S)-dihydroorotate + a quinone = orotate + a quinol</text>
        <dbReference type="Rhea" id="RHEA:30187"/>
        <dbReference type="ChEBI" id="CHEBI:24646"/>
        <dbReference type="ChEBI" id="CHEBI:30839"/>
        <dbReference type="ChEBI" id="CHEBI:30864"/>
        <dbReference type="ChEBI" id="CHEBI:132124"/>
        <dbReference type="EC" id="1.3.5.2"/>
    </reaction>
</comment>
<comment type="cofactor">
    <cofactor evidence="1">
        <name>FMN</name>
        <dbReference type="ChEBI" id="CHEBI:58210"/>
    </cofactor>
    <text evidence="1">Binds 1 FMN per subunit.</text>
</comment>
<comment type="pathway">
    <text evidence="1">Pyrimidine metabolism; UMP biosynthesis via de novo pathway; orotate from (S)-dihydroorotate (quinone route): step 1/1.</text>
</comment>
<comment type="subunit">
    <text evidence="1">Monomer.</text>
</comment>
<comment type="subcellular location">
    <subcellularLocation>
        <location evidence="1">Cell membrane</location>
        <topology evidence="1">Peripheral membrane protein</topology>
    </subcellularLocation>
</comment>
<comment type="similarity">
    <text evidence="1">Belongs to the dihydroorotate dehydrogenase family. Type 2 subfamily.</text>
</comment>
<sequence length="351" mass="37530">MYSLARPFLFSLDAERAHALALRSIDTAYRTGTTALLARRPVPLPTPAFGLMFPNPVGLGAGLDKNGEHIDALFALGFGFVEIGTVTPRAQEGNPKPRMFRLPEYQAVINRMGFNNLGVDALVANVQRARRTGGLLGINIGKNKDTSNEEATSDYRYCMERVYPLADYITVNISSPNTAGLRELQEEQSLRRLISDLRETQEALSAQHGKRVPMLVKVAPDLNDRDIDAAARVLADLAVDGVIATNTTVTRTLVANHPLAAEAGGLSGAPLLGQSTLVLRRLRARLPESIPLIGVGGINSGADAVAKMAAGASLVQCYSGLVYRGPQLIGECVNAIRRRREAPSGGAVSPL</sequence>
<name>PYRD_XANAC</name>
<feature type="chain" id="PRO_0000148489" description="Dihydroorotate dehydrogenase (quinone)">
    <location>
        <begin position="1"/>
        <end position="351"/>
    </location>
</feature>
<feature type="active site" description="Nucleophile" evidence="1">
    <location>
        <position position="175"/>
    </location>
</feature>
<feature type="binding site" evidence="1">
    <location>
        <begin position="61"/>
        <end position="65"/>
    </location>
    <ligand>
        <name>FMN</name>
        <dbReference type="ChEBI" id="CHEBI:58210"/>
    </ligand>
</feature>
<feature type="binding site" evidence="1">
    <location>
        <position position="65"/>
    </location>
    <ligand>
        <name>substrate</name>
    </ligand>
</feature>
<feature type="binding site" evidence="1">
    <location>
        <position position="85"/>
    </location>
    <ligand>
        <name>FMN</name>
        <dbReference type="ChEBI" id="CHEBI:58210"/>
    </ligand>
</feature>
<feature type="binding site" evidence="1">
    <location>
        <begin position="110"/>
        <end position="114"/>
    </location>
    <ligand>
        <name>substrate</name>
    </ligand>
</feature>
<feature type="binding site" evidence="1">
    <location>
        <position position="139"/>
    </location>
    <ligand>
        <name>FMN</name>
        <dbReference type="ChEBI" id="CHEBI:58210"/>
    </ligand>
</feature>
<feature type="binding site" evidence="1">
    <location>
        <position position="172"/>
    </location>
    <ligand>
        <name>FMN</name>
        <dbReference type="ChEBI" id="CHEBI:58210"/>
    </ligand>
</feature>
<feature type="binding site" evidence="1">
    <location>
        <position position="172"/>
    </location>
    <ligand>
        <name>substrate</name>
    </ligand>
</feature>
<feature type="binding site" evidence="1">
    <location>
        <position position="177"/>
    </location>
    <ligand>
        <name>substrate</name>
    </ligand>
</feature>
<feature type="binding site" evidence="1">
    <location>
        <position position="217"/>
    </location>
    <ligand>
        <name>FMN</name>
        <dbReference type="ChEBI" id="CHEBI:58210"/>
    </ligand>
</feature>
<feature type="binding site" evidence="1">
    <location>
        <position position="245"/>
    </location>
    <ligand>
        <name>FMN</name>
        <dbReference type="ChEBI" id="CHEBI:58210"/>
    </ligand>
</feature>
<feature type="binding site" evidence="1">
    <location>
        <begin position="246"/>
        <end position="247"/>
    </location>
    <ligand>
        <name>substrate</name>
    </ligand>
</feature>
<feature type="binding site" evidence="1">
    <location>
        <position position="268"/>
    </location>
    <ligand>
        <name>FMN</name>
        <dbReference type="ChEBI" id="CHEBI:58210"/>
    </ligand>
</feature>
<feature type="binding site" evidence="1">
    <location>
        <position position="297"/>
    </location>
    <ligand>
        <name>FMN</name>
        <dbReference type="ChEBI" id="CHEBI:58210"/>
    </ligand>
</feature>
<feature type="binding site" evidence="1">
    <location>
        <begin position="318"/>
        <end position="319"/>
    </location>
    <ligand>
        <name>FMN</name>
        <dbReference type="ChEBI" id="CHEBI:58210"/>
    </ligand>
</feature>
<evidence type="ECO:0000255" key="1">
    <source>
        <dbReference type="HAMAP-Rule" id="MF_00225"/>
    </source>
</evidence>
<proteinExistence type="inferred from homology"/>
<keyword id="KW-1003">Cell membrane</keyword>
<keyword id="KW-0285">Flavoprotein</keyword>
<keyword id="KW-0288">FMN</keyword>
<keyword id="KW-0472">Membrane</keyword>
<keyword id="KW-0560">Oxidoreductase</keyword>
<keyword id="KW-0665">Pyrimidine biosynthesis</keyword>
<organism>
    <name type="scientific">Xanthomonas axonopodis pv. citri (strain 306)</name>
    <dbReference type="NCBI Taxonomy" id="190486"/>
    <lineage>
        <taxon>Bacteria</taxon>
        <taxon>Pseudomonadati</taxon>
        <taxon>Pseudomonadota</taxon>
        <taxon>Gammaproteobacteria</taxon>
        <taxon>Lysobacterales</taxon>
        <taxon>Lysobacteraceae</taxon>
        <taxon>Xanthomonas</taxon>
    </lineage>
</organism>
<accession>Q8PLJ2</accession>
<protein>
    <recommendedName>
        <fullName evidence="1">Dihydroorotate dehydrogenase (quinone)</fullName>
        <ecNumber evidence="1">1.3.5.2</ecNumber>
    </recommendedName>
    <alternativeName>
        <fullName evidence="1">DHOdehase</fullName>
        <shortName evidence="1">DHOD</shortName>
        <shortName evidence="1">DHODase</shortName>
    </alternativeName>
    <alternativeName>
        <fullName evidence="1">Dihydroorotate oxidase</fullName>
    </alternativeName>
</protein>